<reference key="1">
    <citation type="journal article" date="2002" name="Hum. Genet.">
        <title>The left-right determinant inversin has highly conserved ankyrin repeat and IQ domains and interacts with calmodulin.</title>
        <authorList>
            <person name="Morgan D."/>
            <person name="Goodship J."/>
            <person name="Essner J.J."/>
            <person name="Vogan K.J."/>
            <person name="Turnpenny L."/>
            <person name="Yost H.J."/>
            <person name="Tabin C.J."/>
            <person name="Strachan T."/>
        </authorList>
    </citation>
    <scope>NUCLEOTIDE SEQUENCE [MRNA]</scope>
</reference>
<accession>Q8UVC3</accession>
<comment type="function">
    <text evidence="1">Required for normal renal development and establishment of left-right axis. Probably acts as a molecular switch between different Wnt signaling pathways. Inhibits the canonical Wnt pathway by targeting cytoplasmic disheveled for degradation by the ubiquitin-proteasome. This suggests that it is required in renal development to oppose the repression of terminal differentiation of tubular epithelial cells by Wnt signaling (By similarity).</text>
</comment>
<comment type="subunit">
    <text evidence="1">Binds calmodulin via its IQ domains. Interacts with APC2 (By similarity).</text>
</comment>
<comment type="subcellular location">
    <subcellularLocation>
        <location evidence="1">Cytoplasm</location>
    </subcellularLocation>
    <subcellularLocation>
        <location evidence="1">Cytoplasm</location>
        <location evidence="1">Cytoskeleton</location>
    </subcellularLocation>
    <text evidence="1">Associates with the cytoskeleton.</text>
</comment>
<comment type="domain">
    <text evidence="1">The D-box (destruction box) mediate the interaction with APC proteins, and may act as a recognition signal for degradation via the ubiquitin-proteasome pathway.</text>
</comment>
<comment type="sequence caution" evidence="4">
    <conflict type="erroneous initiation">
        <sequence resource="EMBL-CDS" id="AAL69975"/>
    </conflict>
</comment>
<proteinExistence type="evidence at transcript level"/>
<name>INVS_CHICK</name>
<organism>
    <name type="scientific">Gallus gallus</name>
    <name type="common">Chicken</name>
    <dbReference type="NCBI Taxonomy" id="9031"/>
    <lineage>
        <taxon>Eukaryota</taxon>
        <taxon>Metazoa</taxon>
        <taxon>Chordata</taxon>
        <taxon>Craniata</taxon>
        <taxon>Vertebrata</taxon>
        <taxon>Euteleostomi</taxon>
        <taxon>Archelosauria</taxon>
        <taxon>Archosauria</taxon>
        <taxon>Dinosauria</taxon>
        <taxon>Saurischia</taxon>
        <taxon>Theropoda</taxon>
        <taxon>Coelurosauria</taxon>
        <taxon>Aves</taxon>
        <taxon>Neognathae</taxon>
        <taxon>Galloanserae</taxon>
        <taxon>Galliformes</taxon>
        <taxon>Phasianidae</taxon>
        <taxon>Phasianinae</taxon>
        <taxon>Gallus</taxon>
    </lineage>
</organism>
<feature type="chain" id="PRO_0000067018" description="Inversin">
    <location>
        <begin position="1"/>
        <end position="1106"/>
    </location>
</feature>
<feature type="repeat" description="ANK 1">
    <location>
        <begin position="13"/>
        <end position="42"/>
    </location>
</feature>
<feature type="repeat" description="ANK 2">
    <location>
        <begin position="47"/>
        <end position="76"/>
    </location>
</feature>
<feature type="repeat" description="ANK 3">
    <location>
        <begin position="80"/>
        <end position="110"/>
    </location>
</feature>
<feature type="repeat" description="ANK 4">
    <location>
        <begin position="113"/>
        <end position="144"/>
    </location>
</feature>
<feature type="repeat" description="ANK 5">
    <location>
        <begin position="148"/>
        <end position="177"/>
    </location>
</feature>
<feature type="repeat" description="ANK 6">
    <location>
        <begin position="181"/>
        <end position="213"/>
    </location>
</feature>
<feature type="repeat" description="ANK 7">
    <location>
        <begin position="220"/>
        <end position="250"/>
    </location>
</feature>
<feature type="repeat" description="ANK 8">
    <location>
        <begin position="254"/>
        <end position="285"/>
    </location>
</feature>
<feature type="repeat" description="ANK 9">
    <location>
        <begin position="288"/>
        <end position="317"/>
    </location>
</feature>
<feature type="repeat" description="ANK 10">
    <location>
        <begin position="321"/>
        <end position="350"/>
    </location>
</feature>
<feature type="repeat" description="ANK 11">
    <location>
        <begin position="356"/>
        <end position="385"/>
    </location>
</feature>
<feature type="repeat" description="ANK 12">
    <location>
        <begin position="389"/>
        <end position="418"/>
    </location>
</feature>
<feature type="repeat" description="ANK 13">
    <location>
        <begin position="422"/>
        <end position="451"/>
    </location>
</feature>
<feature type="repeat" description="ANK 14">
    <location>
        <begin position="455"/>
        <end position="484"/>
    </location>
</feature>
<feature type="repeat" description="ANK 15">
    <location>
        <begin position="488"/>
        <end position="517"/>
    </location>
</feature>
<feature type="repeat" description="ANK 16">
    <location>
        <begin position="523"/>
        <end position="553"/>
    </location>
</feature>
<feature type="domain" description="IQ 1" evidence="2">
    <location>
        <begin position="555"/>
        <end position="584"/>
    </location>
</feature>
<feature type="domain" description="IQ 2" evidence="2">
    <location>
        <begin position="951"/>
        <end position="980"/>
    </location>
</feature>
<feature type="region of interest" description="Disordered" evidence="3">
    <location>
        <begin position="589"/>
        <end position="615"/>
    </location>
</feature>
<feature type="region of interest" description="Disordered" evidence="3">
    <location>
        <begin position="636"/>
        <end position="688"/>
    </location>
</feature>
<feature type="region of interest" description="Disordered" evidence="3">
    <location>
        <begin position="746"/>
        <end position="782"/>
    </location>
</feature>
<feature type="region of interest" description="Disordered" evidence="3">
    <location>
        <begin position="809"/>
        <end position="833"/>
    </location>
</feature>
<feature type="short sequence motif" description="D-box 1">
    <location>
        <begin position="490"/>
        <end position="498"/>
    </location>
</feature>
<feature type="short sequence motif" description="D-box 2">
    <location>
        <begin position="944"/>
        <end position="952"/>
    </location>
</feature>
<feature type="compositionally biased region" description="Basic and acidic residues" evidence="3">
    <location>
        <begin position="589"/>
        <end position="607"/>
    </location>
</feature>
<feature type="compositionally biased region" description="Polar residues" evidence="3">
    <location>
        <begin position="636"/>
        <end position="645"/>
    </location>
</feature>
<feature type="compositionally biased region" description="Polar residues" evidence="3">
    <location>
        <begin position="653"/>
        <end position="666"/>
    </location>
</feature>
<feature type="compositionally biased region" description="Basic residues" evidence="3">
    <location>
        <begin position="812"/>
        <end position="822"/>
    </location>
</feature>
<keyword id="KW-0040">ANK repeat</keyword>
<keyword id="KW-0112">Calmodulin-binding</keyword>
<keyword id="KW-0963">Cytoplasm</keyword>
<keyword id="KW-0206">Cytoskeleton</keyword>
<keyword id="KW-0217">Developmental protein</keyword>
<keyword id="KW-1185">Reference proteome</keyword>
<keyword id="KW-0677">Repeat</keyword>
<keyword id="KW-0879">Wnt signaling pathway</keyword>
<evidence type="ECO:0000250" key="1"/>
<evidence type="ECO:0000255" key="2">
    <source>
        <dbReference type="PROSITE-ProRule" id="PRU00116"/>
    </source>
</evidence>
<evidence type="ECO:0000256" key="3">
    <source>
        <dbReference type="SAM" id="MobiDB-lite"/>
    </source>
</evidence>
<evidence type="ECO:0000305" key="4"/>
<gene>
    <name type="primary">INVS</name>
</gene>
<sequence length="1106" mass="122553">MNISANCLFSGSSLASEVHAAAVNGDKSTLLKLIAGNSELKDKEDQFGRTPLMYCVLADRVDCAEALLKAGADVNRADRSRRTALHLAAQKGNYRFMKLLLARRGNWMQKDLEGMTPLHLTTRHKSPKCLALLLKHMAPGEVDTQDRNKQTALHWSAYYNNPEHVKLLIKHDSNIGIPDIEGKIPLHWAANNKDPSAIHTVKCILEAAPTESLLNWQDYEGRTPLHFAVADGNVAVVDVLTSYEGCNVTSYDNLFRTPLHWAALLGHAQIVHLLLERNKFGTIPSDSQGATPLHYAAQSNFAETVEVFLKHPSVKDDSDLEGRTSFMWAAGKGSDNVIRTMLDLKLDIDINMTDKYAGTALHAAALSGHVSTVKLLLERNAQVDALDVMKHTPLFRACEMGHKEVIQTLIKGGARVDLVDQDGHSPLHWAALGGNADVCQILIENKINPNVQDYAGRTPLQCAAYGGYINCMVVLLENNADPNIQDKEGRTALHWLCNNGYLDAIKLLLGFDAFPNHMENSEERYTPLDYALLGEHHEVIQFMLEHGALSIAAIQDIAAFKIQAVYKGYKVRKAFQERKNLLMKHEQLRKDAAAKKREEESKRKEASLQKGMQNMEQNKFQVQLSTAVREKTASTLQLSNKQTDLQNKRPLSVSASQIQLGRNSRGSPKACRSKGSPKESCLSSELQSEGHNIRQELLRKHIKSKPSCVHFHCGKVKEVTKVEAKHQVAAATELNGEKHKEHAVEANGTSAHGNRRHASACGTAGAGEKTRDQSLSSSGNRGHCEGTSVVVCNVSCAGGIARNSKRCEAVPKSKRHQQKSRHKEVNYERCSPAGSSRPGSAKVVFVNTRNATVCAIEHANNVGNHELAKKTSPLLSTETESTGTGPRNPAACSALDDSLNLEKTGEVGSRSAGDQLCSVAWQSTNIELIPLEIRMQIIEKERTRKELFRKKNYAATVIQRTWRSYRLRQELSQLLSAKRQRKEDEDKWRQETAAFLIQVAWKKQLNHSPQKSVPSCKSLKSVNKTSSAIKTSKQSILKQIYGRSQEGRVYQPARPPSKLKLSDVQLVSANNLQYVNLLENVGKSKQFSYNMRPSTAAKSKSTRLEH</sequence>
<protein>
    <recommendedName>
        <fullName>Inversin</fullName>
    </recommendedName>
</protein>
<dbReference type="EMBL" id="AF465207">
    <property type="protein sequence ID" value="AAL69975.1"/>
    <property type="status" value="ALT_INIT"/>
    <property type="molecule type" value="mRNA"/>
</dbReference>
<dbReference type="RefSeq" id="NP_989882.1">
    <property type="nucleotide sequence ID" value="NM_204551.1"/>
</dbReference>
<dbReference type="SMR" id="Q8UVC3"/>
<dbReference type="FunCoup" id="Q8UVC3">
    <property type="interactions" value="1035"/>
</dbReference>
<dbReference type="STRING" id="9031.ENSGALP00000030342"/>
<dbReference type="PaxDb" id="9031-ENSGALP00000030342"/>
<dbReference type="GeneID" id="395234"/>
<dbReference type="KEGG" id="gga:395234"/>
<dbReference type="CTD" id="27130"/>
<dbReference type="VEuPathDB" id="HostDB:geneid_395234"/>
<dbReference type="eggNOG" id="KOG0504">
    <property type="taxonomic scope" value="Eukaryota"/>
</dbReference>
<dbReference type="InParanoid" id="Q8UVC3"/>
<dbReference type="OrthoDB" id="20872at2759"/>
<dbReference type="PhylomeDB" id="Q8UVC3"/>
<dbReference type="PRO" id="PR:Q8UVC3"/>
<dbReference type="Proteomes" id="UP000000539">
    <property type="component" value="Unassembled WGS sequence"/>
</dbReference>
<dbReference type="GO" id="GO:0005929">
    <property type="term" value="C:cilium"/>
    <property type="evidence" value="ECO:0000318"/>
    <property type="project" value="GO_Central"/>
</dbReference>
<dbReference type="GO" id="GO:0005737">
    <property type="term" value="C:cytoplasm"/>
    <property type="evidence" value="ECO:0007669"/>
    <property type="project" value="UniProtKB-SubCell"/>
</dbReference>
<dbReference type="GO" id="GO:0005856">
    <property type="term" value="C:cytoskeleton"/>
    <property type="evidence" value="ECO:0007669"/>
    <property type="project" value="UniProtKB-SubCell"/>
</dbReference>
<dbReference type="GO" id="GO:0005516">
    <property type="term" value="F:calmodulin binding"/>
    <property type="evidence" value="ECO:0007669"/>
    <property type="project" value="UniProtKB-KW"/>
</dbReference>
<dbReference type="GO" id="GO:0001822">
    <property type="term" value="P:kidney development"/>
    <property type="evidence" value="ECO:0000318"/>
    <property type="project" value="GO_Central"/>
</dbReference>
<dbReference type="GO" id="GO:1904108">
    <property type="term" value="P:protein localization to ciliary inversin compartment"/>
    <property type="evidence" value="ECO:0000318"/>
    <property type="project" value="GO_Central"/>
</dbReference>
<dbReference type="GO" id="GO:0016055">
    <property type="term" value="P:Wnt signaling pathway"/>
    <property type="evidence" value="ECO:0007669"/>
    <property type="project" value="UniProtKB-KW"/>
</dbReference>
<dbReference type="CDD" id="cd23767">
    <property type="entry name" value="IQCD"/>
    <property type="match status" value="2"/>
</dbReference>
<dbReference type="FunFam" id="1.25.40.20:FF:000078">
    <property type="entry name" value="Inversin"/>
    <property type="match status" value="1"/>
</dbReference>
<dbReference type="FunFam" id="1.25.40.20:FF:000082">
    <property type="entry name" value="Inversin"/>
    <property type="match status" value="1"/>
</dbReference>
<dbReference type="FunFam" id="1.25.40.20:FF:000092">
    <property type="entry name" value="inversin isoform X1"/>
    <property type="match status" value="1"/>
</dbReference>
<dbReference type="FunFam" id="1.25.40.20:FF:000134">
    <property type="entry name" value="inversin isoform X1"/>
    <property type="match status" value="1"/>
</dbReference>
<dbReference type="FunFam" id="1.25.40.20:FF:000144">
    <property type="entry name" value="inversin isoform X1"/>
    <property type="match status" value="1"/>
</dbReference>
<dbReference type="Gene3D" id="1.25.40.20">
    <property type="entry name" value="Ankyrin repeat-containing domain"/>
    <property type="match status" value="4"/>
</dbReference>
<dbReference type="InterPro" id="IPR050663">
    <property type="entry name" value="Ankyrin-SOCS_Box"/>
</dbReference>
<dbReference type="InterPro" id="IPR002110">
    <property type="entry name" value="Ankyrin_rpt"/>
</dbReference>
<dbReference type="InterPro" id="IPR036770">
    <property type="entry name" value="Ankyrin_rpt-contain_sf"/>
</dbReference>
<dbReference type="InterPro" id="IPR000048">
    <property type="entry name" value="IQ_motif_EF-hand-BS"/>
</dbReference>
<dbReference type="PANTHER" id="PTHR24193:SF121">
    <property type="entry name" value="ADA2A-CONTAINING COMPLEX COMPONENT 3, ISOFORM D"/>
    <property type="match status" value="1"/>
</dbReference>
<dbReference type="PANTHER" id="PTHR24193">
    <property type="entry name" value="ANKYRIN REPEAT PROTEIN"/>
    <property type="match status" value="1"/>
</dbReference>
<dbReference type="Pfam" id="PF00023">
    <property type="entry name" value="Ank"/>
    <property type="match status" value="2"/>
</dbReference>
<dbReference type="Pfam" id="PF12796">
    <property type="entry name" value="Ank_2"/>
    <property type="match status" value="3"/>
</dbReference>
<dbReference type="Pfam" id="PF13637">
    <property type="entry name" value="Ank_4"/>
    <property type="match status" value="1"/>
</dbReference>
<dbReference type="Pfam" id="PF13857">
    <property type="entry name" value="Ank_5"/>
    <property type="match status" value="1"/>
</dbReference>
<dbReference type="Pfam" id="PF00612">
    <property type="entry name" value="IQ"/>
    <property type="match status" value="2"/>
</dbReference>
<dbReference type="SMART" id="SM00248">
    <property type="entry name" value="ANK"/>
    <property type="match status" value="16"/>
</dbReference>
<dbReference type="SMART" id="SM00015">
    <property type="entry name" value="IQ"/>
    <property type="match status" value="2"/>
</dbReference>
<dbReference type="SUPFAM" id="SSF48403">
    <property type="entry name" value="Ankyrin repeat"/>
    <property type="match status" value="2"/>
</dbReference>
<dbReference type="PROSITE" id="PS50297">
    <property type="entry name" value="ANK_REP_REGION"/>
    <property type="match status" value="1"/>
</dbReference>
<dbReference type="PROSITE" id="PS50088">
    <property type="entry name" value="ANK_REPEAT"/>
    <property type="match status" value="11"/>
</dbReference>
<dbReference type="PROSITE" id="PS50096">
    <property type="entry name" value="IQ"/>
    <property type="match status" value="2"/>
</dbReference>